<comment type="function">
    <text evidence="7">Specifically phosphorylates the activated forms of G protein-coupled receptors. Plays an important role in the regulation of renal sodium handling and blood pressure.</text>
</comment>
<comment type="catalytic activity">
    <reaction>
        <text>[G-protein-coupled receptor] + ATP = [G-protein-coupled receptor]-phosphate + ADP + H(+)</text>
        <dbReference type="Rhea" id="RHEA:12008"/>
        <dbReference type="Rhea" id="RHEA-COMP:11260"/>
        <dbReference type="Rhea" id="RHEA-COMP:11261"/>
        <dbReference type="ChEBI" id="CHEBI:15378"/>
        <dbReference type="ChEBI" id="CHEBI:30616"/>
        <dbReference type="ChEBI" id="CHEBI:43176"/>
        <dbReference type="ChEBI" id="CHEBI:68546"/>
        <dbReference type="ChEBI" id="CHEBI:456216"/>
        <dbReference type="EC" id="2.7.11.16"/>
    </reaction>
</comment>
<comment type="activity regulation">
    <text evidence="1">Inhibited by heparin.</text>
</comment>
<comment type="subunit">
    <text evidence="1">Interacts with DRD3.</text>
</comment>
<comment type="subcellular location">
    <subcellularLocation>
        <location>Cytoplasm</location>
    </subcellularLocation>
    <subcellularLocation>
        <location evidence="1">Cytoplasm</location>
        <location evidence="1">Cell cortex</location>
    </subcellularLocation>
</comment>
<comment type="alternative products">
    <event type="alternative splicing"/>
    <isoform>
        <id>P70507-1</id>
        <name>GRK4A</name>
        <sequence type="displayed"/>
    </isoform>
    <isoform>
        <id>P70507-2</id>
        <name>GRK4B</name>
        <sequence type="described" ref="VSP_010352"/>
    </isoform>
</comment>
<comment type="tissue specificity">
    <text evidence="8">Isoform GRK4A is expressed in testis. Isoform GRK4B is heterogeneously distributed in the kidney, with 20-fold enrichment in the outer medulla. Has a widespread but low level of expression in tissues other than testis.</text>
</comment>
<comment type="PTM">
    <text evidence="1">Palmitoylated.</text>
</comment>
<comment type="similarity">
    <text evidence="10">Belongs to the protein kinase superfamily. AGC Ser/Thr protein kinase family. GPRK subfamily.</text>
</comment>
<reference key="1">
    <citation type="journal article" date="1998" name="Endocrinology">
        <title>Rat G protein-coupled receptor kinase GRK4: identification, functional expression, and differential tissue distribution of two splice variants.</title>
        <authorList>
            <person name="Virlon B."/>
            <person name="Firsov D."/>
            <person name="Cheval L."/>
            <person name="Reiter E."/>
            <person name="Troispoux C."/>
            <person name="Guillou F."/>
            <person name="Elalouf J.-M."/>
        </authorList>
    </citation>
    <scope>NUCLEOTIDE SEQUENCE [MRNA] (ISOFORMS GRK4A AND GRK4B)</scope>
    <scope>CHARACTERIZATION</scope>
    <scope>TISSUE SPECIFICITY</scope>
</reference>
<reference key="2">
    <citation type="journal article" date="2006" name="Hypertension">
        <title>Amelioration of genetic hypertension by suppression of renal G protein-coupled receptor kinase type 4 expression.</title>
        <authorList>
            <person name="Sanada H."/>
            <person name="Yatabe J."/>
            <person name="Midorikawa S."/>
            <person name="Katoh T."/>
            <person name="Hashimoto S."/>
            <person name="Watanabe T."/>
            <person name="Xu J."/>
            <person name="Luo Y."/>
            <person name="Wang X."/>
            <person name="Zeng C."/>
            <person name="Armando I."/>
            <person name="Felder R.A."/>
            <person name="Jose P.A."/>
        </authorList>
    </citation>
    <scope>FUNCTION</scope>
</reference>
<reference key="3">
    <citation type="journal article" date="2012" name="Nat. Commun.">
        <title>Quantitative maps of protein phosphorylation sites across 14 different rat organs and tissues.</title>
        <authorList>
            <person name="Lundby A."/>
            <person name="Secher A."/>
            <person name="Lage K."/>
            <person name="Nordsborg N.B."/>
            <person name="Dmytriyev A."/>
            <person name="Lundby C."/>
            <person name="Olsen J.V."/>
        </authorList>
    </citation>
    <scope>PHOSPHORYLATION [LARGE SCALE ANALYSIS] AT SER-484</scope>
    <scope>IDENTIFICATION BY MASS SPECTROMETRY [LARGE SCALE ANALYSIS]</scope>
</reference>
<accession>P70507</accession>
<accession>P70508</accession>
<feature type="chain" id="PRO_0000085969" description="G protein-coupled receptor kinase 4">
    <location>
        <begin position="1"/>
        <end position="575"/>
    </location>
</feature>
<feature type="domain" description="RGS" evidence="4">
    <location>
        <begin position="51"/>
        <end position="171"/>
    </location>
</feature>
<feature type="domain" description="Protein kinase" evidence="3">
    <location>
        <begin position="186"/>
        <end position="448"/>
    </location>
</feature>
<feature type="domain" description="AGC-kinase C-terminal" evidence="5">
    <location>
        <begin position="449"/>
        <end position="514"/>
    </location>
</feature>
<feature type="region of interest" description="N-terminal">
    <location>
        <begin position="1"/>
        <end position="153"/>
    </location>
</feature>
<feature type="active site" description="Proton acceptor" evidence="3 6">
    <location>
        <position position="311"/>
    </location>
</feature>
<feature type="binding site" evidence="3">
    <location>
        <begin position="192"/>
        <end position="200"/>
    </location>
    <ligand>
        <name>ATP</name>
        <dbReference type="ChEBI" id="CHEBI:30616"/>
    </ligand>
</feature>
<feature type="binding site" evidence="3">
    <location>
        <position position="215"/>
    </location>
    <ligand>
        <name>ATP</name>
        <dbReference type="ChEBI" id="CHEBI:30616"/>
    </ligand>
</feature>
<feature type="modified residue" description="N-acetylmethionine" evidence="2">
    <location>
        <position position="1"/>
    </location>
</feature>
<feature type="modified residue" description="Phosphoserine" evidence="11">
    <location>
        <position position="484"/>
    </location>
</feature>
<feature type="splice variant" id="VSP_010352" description="In isoform GRK4B." evidence="9">
    <location>
        <begin position="148"/>
        <end position="178"/>
    </location>
</feature>
<name>GRK4_RAT</name>
<dbReference type="EC" id="2.7.11.16"/>
<dbReference type="EMBL" id="X97568">
    <property type="protein sequence ID" value="CAA66180.1"/>
    <property type="molecule type" value="mRNA"/>
</dbReference>
<dbReference type="EMBL" id="X97568">
    <property type="protein sequence ID" value="CAA66181.1"/>
    <property type="molecule type" value="mRNA"/>
</dbReference>
<dbReference type="RefSeq" id="NP_001415919.1">
    <molecule id="P70507-2"/>
    <property type="nucleotide sequence ID" value="NM_001428990.1"/>
</dbReference>
<dbReference type="RefSeq" id="NP_075217.1">
    <molecule id="P70507-1"/>
    <property type="nucleotide sequence ID" value="NM_022928.2"/>
</dbReference>
<dbReference type="RefSeq" id="XP_006251421.1">
    <property type="nucleotide sequence ID" value="XM_006251359.2"/>
</dbReference>
<dbReference type="SMR" id="P70507"/>
<dbReference type="FunCoup" id="P70507">
    <property type="interactions" value="1823"/>
</dbReference>
<dbReference type="STRING" id="10116.ENSRNOP00000015894"/>
<dbReference type="iPTMnet" id="P70507"/>
<dbReference type="PhosphoSitePlus" id="P70507"/>
<dbReference type="PaxDb" id="10116-ENSRNOP00000015894"/>
<dbReference type="Ensembl" id="ENSRNOT00000015894.5">
    <molecule id="P70507-1"/>
    <property type="protein sequence ID" value="ENSRNOP00000015894.2"/>
    <property type="gene ID" value="ENSRNOG00000011847.6"/>
</dbReference>
<dbReference type="Ensembl" id="ENSRNOT00000094171.1">
    <molecule id="P70507-2"/>
    <property type="protein sequence ID" value="ENSRNOP00000088283.1"/>
    <property type="gene ID" value="ENSRNOG00000011847.6"/>
</dbReference>
<dbReference type="GeneID" id="59077"/>
<dbReference type="KEGG" id="rno:59077"/>
<dbReference type="AGR" id="RGD:61858"/>
<dbReference type="CTD" id="2868"/>
<dbReference type="RGD" id="61858">
    <property type="gene designation" value="Grk4"/>
</dbReference>
<dbReference type="eggNOG" id="KOG0986">
    <property type="taxonomic scope" value="Eukaryota"/>
</dbReference>
<dbReference type="GeneTree" id="ENSGT00940000160151"/>
<dbReference type="HOGENOM" id="CLU_000288_63_41_1"/>
<dbReference type="InParanoid" id="P70507"/>
<dbReference type="PhylomeDB" id="P70507"/>
<dbReference type="TreeFam" id="TF313940"/>
<dbReference type="Reactome" id="R-RNO-2514859">
    <property type="pathway name" value="Inactivation, recovery and regulation of the phototransduction cascade"/>
</dbReference>
<dbReference type="PRO" id="PR:P70507"/>
<dbReference type="Proteomes" id="UP000002494">
    <property type="component" value="Chromosome 14"/>
</dbReference>
<dbReference type="Bgee" id="ENSRNOG00000011847">
    <property type="expression patterns" value="Expressed in testis and 19 other cell types or tissues"/>
</dbReference>
<dbReference type="GO" id="GO:0005938">
    <property type="term" value="C:cell cortex"/>
    <property type="evidence" value="ECO:0007669"/>
    <property type="project" value="UniProtKB-SubCell"/>
</dbReference>
<dbReference type="GO" id="GO:0005737">
    <property type="term" value="C:cytoplasm"/>
    <property type="evidence" value="ECO:0000318"/>
    <property type="project" value="GO_Central"/>
</dbReference>
<dbReference type="GO" id="GO:0030425">
    <property type="term" value="C:dendrite"/>
    <property type="evidence" value="ECO:0000314"/>
    <property type="project" value="RGD"/>
</dbReference>
<dbReference type="GO" id="GO:0043025">
    <property type="term" value="C:neuronal cell body"/>
    <property type="evidence" value="ECO:0000314"/>
    <property type="project" value="RGD"/>
</dbReference>
<dbReference type="GO" id="GO:0005524">
    <property type="term" value="F:ATP binding"/>
    <property type="evidence" value="ECO:0007669"/>
    <property type="project" value="UniProtKB-KW"/>
</dbReference>
<dbReference type="GO" id="GO:0004672">
    <property type="term" value="F:protein kinase activity"/>
    <property type="evidence" value="ECO:0000318"/>
    <property type="project" value="GO_Central"/>
</dbReference>
<dbReference type="GO" id="GO:0050254">
    <property type="term" value="F:rhodopsin kinase activity"/>
    <property type="evidence" value="ECO:0000314"/>
    <property type="project" value="RGD"/>
</dbReference>
<dbReference type="GO" id="GO:0002029">
    <property type="term" value="P:desensitization of G protein-coupled receptor signaling pathway"/>
    <property type="evidence" value="ECO:0000315"/>
    <property type="project" value="RGD"/>
</dbReference>
<dbReference type="GO" id="GO:0002031">
    <property type="term" value="P:G protein-coupled receptor internalization"/>
    <property type="evidence" value="ECO:0000315"/>
    <property type="project" value="RGD"/>
</dbReference>
<dbReference type="GO" id="GO:0031623">
    <property type="term" value="P:receptor internalization"/>
    <property type="evidence" value="ECO:0000266"/>
    <property type="project" value="RGD"/>
</dbReference>
<dbReference type="GO" id="GO:0009966">
    <property type="term" value="P:regulation of signal transduction"/>
    <property type="evidence" value="ECO:0000318"/>
    <property type="project" value="GO_Central"/>
</dbReference>
<dbReference type="GO" id="GO:0007165">
    <property type="term" value="P:signal transduction"/>
    <property type="evidence" value="ECO:0007669"/>
    <property type="project" value="InterPro"/>
</dbReference>
<dbReference type="CDD" id="cd05605">
    <property type="entry name" value="STKc_GRK4_like"/>
    <property type="match status" value="1"/>
</dbReference>
<dbReference type="FunFam" id="1.10.167.10:FF:000009">
    <property type="entry name" value="G protein-coupled receptor kinase"/>
    <property type="match status" value="1"/>
</dbReference>
<dbReference type="FunFam" id="1.10.510.10:FF:000074">
    <property type="entry name" value="G protein-coupled receptor kinase"/>
    <property type="match status" value="1"/>
</dbReference>
<dbReference type="Gene3D" id="3.30.200.20">
    <property type="entry name" value="Phosphorylase Kinase, domain 1"/>
    <property type="match status" value="1"/>
</dbReference>
<dbReference type="Gene3D" id="1.10.167.10">
    <property type="entry name" value="Regulator of G-protein Signalling 4, domain 2"/>
    <property type="match status" value="1"/>
</dbReference>
<dbReference type="Gene3D" id="1.10.510.10">
    <property type="entry name" value="Transferase(Phosphotransferase) domain 1"/>
    <property type="match status" value="1"/>
</dbReference>
<dbReference type="InterPro" id="IPR000961">
    <property type="entry name" value="AGC-kinase_C"/>
</dbReference>
<dbReference type="InterPro" id="IPR000239">
    <property type="entry name" value="GPCR_kinase"/>
</dbReference>
<dbReference type="InterPro" id="IPR011009">
    <property type="entry name" value="Kinase-like_dom_sf"/>
</dbReference>
<dbReference type="InterPro" id="IPR000719">
    <property type="entry name" value="Prot_kinase_dom"/>
</dbReference>
<dbReference type="InterPro" id="IPR017441">
    <property type="entry name" value="Protein_kinase_ATP_BS"/>
</dbReference>
<dbReference type="InterPro" id="IPR016137">
    <property type="entry name" value="RGS"/>
</dbReference>
<dbReference type="InterPro" id="IPR036305">
    <property type="entry name" value="RGS_sf"/>
</dbReference>
<dbReference type="InterPro" id="IPR044926">
    <property type="entry name" value="RGS_subdomain_2"/>
</dbReference>
<dbReference type="InterPro" id="IPR008271">
    <property type="entry name" value="Ser/Thr_kinase_AS"/>
</dbReference>
<dbReference type="PANTHER" id="PTHR24355:SF14">
    <property type="entry name" value="G PROTEIN-COUPLED RECEPTOR KINASE 4"/>
    <property type="match status" value="1"/>
</dbReference>
<dbReference type="PANTHER" id="PTHR24355">
    <property type="entry name" value="G PROTEIN-COUPLED RECEPTOR KINASE/RIBOSOMAL PROTEIN S6 KINASE"/>
    <property type="match status" value="1"/>
</dbReference>
<dbReference type="Pfam" id="PF00069">
    <property type="entry name" value="Pkinase"/>
    <property type="match status" value="1"/>
</dbReference>
<dbReference type="Pfam" id="PF00615">
    <property type="entry name" value="RGS"/>
    <property type="match status" value="1"/>
</dbReference>
<dbReference type="PRINTS" id="PR00717">
    <property type="entry name" value="GPCRKINASE"/>
</dbReference>
<dbReference type="SMART" id="SM00315">
    <property type="entry name" value="RGS"/>
    <property type="match status" value="1"/>
</dbReference>
<dbReference type="SMART" id="SM00220">
    <property type="entry name" value="S_TKc"/>
    <property type="match status" value="1"/>
</dbReference>
<dbReference type="SUPFAM" id="SSF56112">
    <property type="entry name" value="Protein kinase-like (PK-like)"/>
    <property type="match status" value="1"/>
</dbReference>
<dbReference type="SUPFAM" id="SSF48097">
    <property type="entry name" value="Regulator of G-protein signaling, RGS"/>
    <property type="match status" value="1"/>
</dbReference>
<dbReference type="PROSITE" id="PS51285">
    <property type="entry name" value="AGC_KINASE_CTER"/>
    <property type="match status" value="1"/>
</dbReference>
<dbReference type="PROSITE" id="PS00107">
    <property type="entry name" value="PROTEIN_KINASE_ATP"/>
    <property type="match status" value="1"/>
</dbReference>
<dbReference type="PROSITE" id="PS50011">
    <property type="entry name" value="PROTEIN_KINASE_DOM"/>
    <property type="match status" value="1"/>
</dbReference>
<dbReference type="PROSITE" id="PS00108">
    <property type="entry name" value="PROTEIN_KINASE_ST"/>
    <property type="match status" value="1"/>
</dbReference>
<dbReference type="PROSITE" id="PS50132">
    <property type="entry name" value="RGS"/>
    <property type="match status" value="1"/>
</dbReference>
<keyword id="KW-0007">Acetylation</keyword>
<keyword id="KW-0025">Alternative splicing</keyword>
<keyword id="KW-0067">ATP-binding</keyword>
<keyword id="KW-0963">Cytoplasm</keyword>
<keyword id="KW-0418">Kinase</keyword>
<keyword id="KW-0449">Lipoprotein</keyword>
<keyword id="KW-0547">Nucleotide-binding</keyword>
<keyword id="KW-0564">Palmitate</keyword>
<keyword id="KW-0597">Phosphoprotein</keyword>
<keyword id="KW-1185">Reference proteome</keyword>
<keyword id="KW-0723">Serine/threonine-protein kinase</keyword>
<keyword id="KW-0808">Transferase</keyword>
<evidence type="ECO:0000250" key="1"/>
<evidence type="ECO:0000250" key="2">
    <source>
        <dbReference type="UniProtKB" id="P32298"/>
    </source>
</evidence>
<evidence type="ECO:0000255" key="3">
    <source>
        <dbReference type="PROSITE-ProRule" id="PRU00159"/>
    </source>
</evidence>
<evidence type="ECO:0000255" key="4">
    <source>
        <dbReference type="PROSITE-ProRule" id="PRU00171"/>
    </source>
</evidence>
<evidence type="ECO:0000255" key="5">
    <source>
        <dbReference type="PROSITE-ProRule" id="PRU00618"/>
    </source>
</evidence>
<evidence type="ECO:0000255" key="6">
    <source>
        <dbReference type="PROSITE-ProRule" id="PRU10027"/>
    </source>
</evidence>
<evidence type="ECO:0000269" key="7">
    <source>
    </source>
</evidence>
<evidence type="ECO:0000269" key="8">
    <source>
    </source>
</evidence>
<evidence type="ECO:0000303" key="9">
    <source>
    </source>
</evidence>
<evidence type="ECO:0000305" key="10"/>
<evidence type="ECO:0007744" key="11">
    <source>
    </source>
</evidence>
<gene>
    <name type="primary">Grk4</name>
    <name type="synonym">Gprk2l</name>
</gene>
<organism>
    <name type="scientific">Rattus norvegicus</name>
    <name type="common">Rat</name>
    <dbReference type="NCBI Taxonomy" id="10116"/>
    <lineage>
        <taxon>Eukaryota</taxon>
        <taxon>Metazoa</taxon>
        <taxon>Chordata</taxon>
        <taxon>Craniata</taxon>
        <taxon>Vertebrata</taxon>
        <taxon>Euteleostomi</taxon>
        <taxon>Mammalia</taxon>
        <taxon>Eutheria</taxon>
        <taxon>Euarchontoglires</taxon>
        <taxon>Glires</taxon>
        <taxon>Rodentia</taxon>
        <taxon>Myomorpha</taxon>
        <taxon>Muroidea</taxon>
        <taxon>Muridae</taxon>
        <taxon>Murinae</taxon>
        <taxon>Rattus</taxon>
    </lineage>
</organism>
<sequence>MELENFMANTLLLKARQGFTKKTGRSKKWRELLKLPPVSMCSDLRHSIEKDFSSLCDQQPIGRLLFRQFCNTKPDLKRCIEFLDAAAEYEVTIEEEQREFGLSIYSRFFKENSEVSLPQIPPDLVKECKCNLKQSSPSQNVFQDCAGVIYKYLSEKPFEEYQESTYYNRFLQWKWLERRPVTKNTFRQYRVLGKGGFGEVCACQVRATGKMYACKKLEKKRIKKRKGEAMALNEKRILEKLHSRFVVSLAYTYETKDALCLVLTIMNGGDLKYHIYNLGNPGFEEQRAVFYAAELCCGLEDLQRERIVYRDLKPENILLDDHGHIRISDLGLALEIPEGEMVRGRVGTVGYMAPEIISHEKYTFSPDWWGLGCLIYEMIAGHSPFRKYKEKVNREEMERRVKTETEEYSERFSENAKSICSMLLTKDPSKRLGCQSDGASAVKQHPIFKDINFSRLEANMLDPPFCPDPEAIYCKDILDIGQFSVVKGVNLDTNDEIFYTQFATGCVTIPWQNEMIESGCFKDLNEYEDKGLSPLEKHKICSCILRPKRNFFHRLFRRAACLNIAHSEEREPTEH</sequence>
<proteinExistence type="evidence at protein level"/>
<protein>
    <recommendedName>
        <fullName>G protein-coupled receptor kinase 4</fullName>
        <ecNumber>2.7.11.16</ecNumber>
    </recommendedName>
    <alternativeName>
        <fullName>G protein-coupled receptor kinase GRK4</fullName>
    </alternativeName>
</protein>